<comment type="function">
    <text evidence="1 4 5">An RbcL-specific chaperone. Required for assembly of the RbcL8 core, acting downstream of the major chaperonin (GroEL-GroES). Acts on newly folded RbcL, has a transient dynamic interaction with RbcL and is eventually displaced by RbcS (PubMed:17574029). The central cleft of the RbcX homodimer (RbcX2) binds the C-terminus of an RbcL monomer, stabilizing the C-terminus and probably preventing its reassociation with chaperonin GroEL-ES. At the same time the peripheral region of RbcX2 binds a second RbcL monomer, bridging the RbcL homodimers in the correct orientation. The RbcX2(2)-bound RbcL dimers then assemble into the RbcL8 core (RbcL8-(RbcX2)8). RbcS binding triggers the release of RbcX2 (By similarity). Required for optimal reconstitution of RuBisCO into its RbcL8S8 holoenzyme form upon expression of rbcL-rbcS subunits in E.coli, and probably also in situ. A frameshift mutation that replaces half the protein reduces accumulation of both RbcL and RbcS subunits and halves activity of RuBisCO in situ and in E.coli (PubMed:15564522).</text>
</comment>
<comment type="subunit">
    <text evidence="1 5 6 7">Homodimer (RbcX2) (PubMed:17574029, Ref.6). Interacts with the exposed C-terminal peptide of RbcL ('Glu-459-Asp-468'); binds 2 RbcL peptides per RbcX2, stapling them into an RbcL2 dimer. A slightly longer peptide binds with a higher affinity, but no long-term stable interaction with RbcL is detected (PubMed:17574029, PubMed:20075914). Contacts a second RbcL monomer via its peripheral polar surface (By similarity).</text>
</comment>
<comment type="subcellular location">
    <subcellularLocation>
        <location evidence="2">Carboxysome</location>
    </subcellularLocation>
    <subcellularLocation>
        <location evidence="2">Cytoplasm</location>
    </subcellularLocation>
    <text evidence="2 10">Most protein is cytoplasmic, but some is in the carboxysome. This cyanobacterium makes beta-type carboxysomes (Probable).</text>
</comment>
<comment type="induction">
    <text evidence="10">Part of the rbcL-rbcX-rbcS operon.</text>
</comment>
<comment type="domain">
    <text evidence="2 5 6">The homodimer has 2 functional domains, a central cleft essential for production of soluble RbcL in which the RbcL peptide binds, and a polar surface which plays a role in correct RbcL subunit arrangement.</text>
</comment>
<comment type="similarity">
    <text evidence="2">Belongs to the RbcX family.</text>
</comment>
<evidence type="ECO:0000250" key="1">
    <source>
        <dbReference type="UniProtKB" id="Q44212"/>
    </source>
</evidence>
<evidence type="ECO:0000255" key="2">
    <source>
        <dbReference type="HAMAP-Rule" id="MF_00855"/>
    </source>
</evidence>
<evidence type="ECO:0000256" key="3">
    <source>
        <dbReference type="SAM" id="MobiDB-lite"/>
    </source>
</evidence>
<evidence type="ECO:0000269" key="4">
    <source>
    </source>
</evidence>
<evidence type="ECO:0000269" key="5">
    <source>
    </source>
</evidence>
<evidence type="ECO:0000269" key="6">
    <source>
    </source>
</evidence>
<evidence type="ECO:0000269" key="7">
    <source ref="6"/>
</evidence>
<evidence type="ECO:0000303" key="8">
    <source>
    </source>
</evidence>
<evidence type="ECO:0000303" key="9">
    <source ref="1"/>
</evidence>
<evidence type="ECO:0000305" key="10"/>
<evidence type="ECO:0007744" key="11">
    <source>
        <dbReference type="PDB" id="2PEI"/>
    </source>
</evidence>
<evidence type="ECO:0007744" key="12">
    <source>
        <dbReference type="PDB" id="2PEJ"/>
    </source>
</evidence>
<evidence type="ECO:0007744" key="13">
    <source>
        <dbReference type="PDB" id="2PEK"/>
    </source>
</evidence>
<evidence type="ECO:0007744" key="14">
    <source>
        <dbReference type="PDB" id="2PEM"/>
    </source>
</evidence>
<evidence type="ECO:0007744" key="15">
    <source>
        <dbReference type="PDB" id="2PEN"/>
    </source>
</evidence>
<evidence type="ECO:0007744" key="16">
    <source>
        <dbReference type="PDB" id="2PEQ"/>
    </source>
</evidence>
<evidence type="ECO:0007744" key="17">
    <source>
        <dbReference type="PDB" id="2Z44"/>
    </source>
</evidence>
<evidence type="ECO:0007744" key="18">
    <source>
        <dbReference type="PDB" id="2Z45"/>
    </source>
</evidence>
<evidence type="ECO:0007744" key="19">
    <source>
        <dbReference type="PDB" id="2Z46"/>
    </source>
</evidence>
<evidence type="ECO:0007829" key="20">
    <source>
        <dbReference type="PDB" id="2PEQ"/>
    </source>
</evidence>
<organism>
    <name type="scientific">Picosynechococcus sp. (strain ATCC 27264 / PCC 7002 / PR-6)</name>
    <name type="common">Agmenellum quadruplicatum</name>
    <dbReference type="NCBI Taxonomy" id="32049"/>
    <lineage>
        <taxon>Bacteria</taxon>
        <taxon>Bacillati</taxon>
        <taxon>Cyanobacteriota</taxon>
        <taxon>Cyanophyceae</taxon>
        <taxon>Oscillatoriophycideae</taxon>
        <taxon>Chroococcales</taxon>
        <taxon>Geminocystaceae</taxon>
        <taxon>Picosynechococcus</taxon>
    </lineage>
</organism>
<sequence>MEFKKVAKETAITLQSYLTYQAVRLISQQLSETNPGQAIWLGEFSKRHPIQESDLYLEAMMLENKELVLRILTVRENLAEGVLEFLPEMVLSQIKQSNGNHRRSLLERLTQVDSSSTDQTEPNPGESDTSEDSE</sequence>
<gene>
    <name evidence="2 8" type="primary">rbcX</name>
    <name evidence="9" type="synonym">orf134</name>
    <name type="ordered locus">SYNPCC7002_A1797</name>
</gene>
<accession>Q44177</accession>
<protein>
    <recommendedName>
        <fullName evidence="2 8">RuBisCO chaperone RbcX</fullName>
    </recommendedName>
</protein>
<keyword id="KW-0002">3D-structure</keyword>
<keyword id="KW-1283">Bacterial microcompartment</keyword>
<keyword id="KW-0120">Carbon dioxide fixation</keyword>
<keyword id="KW-1282">Carboxysome</keyword>
<keyword id="KW-0143">Chaperone</keyword>
<keyword id="KW-0963">Cytoplasm</keyword>
<keyword id="KW-0602">Photosynthesis</keyword>
<keyword id="KW-1185">Reference proteome</keyword>
<feature type="chain" id="PRO_0000451301" description="RuBisCO chaperone RbcX">
    <location>
        <begin position="1"/>
        <end position="134"/>
    </location>
</feature>
<feature type="region of interest" description="Disordered" evidence="3">
    <location>
        <begin position="97"/>
        <end position="134"/>
    </location>
</feature>
<feature type="compositionally biased region" description="Polar residues" evidence="3">
    <location>
        <begin position="111"/>
        <end position="122"/>
    </location>
</feature>
<feature type="mutagenesis site" description="No longer assembles RbcL8, no active RuBisCO formed, no change in crystal structure." evidence="5">
    <original>YLTY</original>
    <variation>ALTL</variation>
    <location>
        <begin position="17"/>
        <end position="20"/>
    </location>
</feature>
<feature type="mutagenesis site" description="Assembles about 50% RbcL8." evidence="5">
    <original>Y</original>
    <variation>A</variation>
    <location>
        <position position="17"/>
    </location>
</feature>
<feature type="mutagenesis site" description="Assembles about 50% RbcL8." evidence="5">
    <original>Y</original>
    <variation>A</variation>
    <variation>L</variation>
    <location>
        <position position="20"/>
    </location>
</feature>
<feature type="mutagenesis site" description="No longer assembles RbcL8, forms a larger misassembled complex, no active RuBisCO formed." evidence="5">
    <original>Q</original>
    <variation>A</variation>
    <location>
        <position position="29"/>
    </location>
</feature>
<feature type="mutagenesis site" description="No longer assembles RbcL8, no active RuBisCO formed." evidence="5">
    <original>E</original>
    <variation>A</variation>
    <location>
        <position position="32"/>
    </location>
</feature>
<feature type="mutagenesis site" description="Assembles about 50% RbcL8." evidence="5">
    <original>T</original>
    <variation>A</variation>
    <location>
        <position position="33"/>
    </location>
</feature>
<feature type="mutagenesis site" description="Assembles about 50% RbcL8." evidence="5">
    <original>P</original>
    <variation>A</variation>
    <location>
        <position position="35"/>
    </location>
</feature>
<feature type="mutagenesis site" description="No longer assembles RbcL8, no active RuBisCO formed." evidence="5">
    <original>R</original>
    <variation>A</variation>
    <location>
        <position position="70"/>
    </location>
</feature>
<feature type="mutagenesis site" description="Assembles about 50% RbcL8." evidence="5">
    <original>V</original>
    <variation>A</variation>
    <location>
        <position position="74"/>
    </location>
</feature>
<feature type="mutagenesis site" description="No longer assembles RbcL8, no active RuBisCO formed." evidence="5">
    <original>R</original>
    <variation>A</variation>
    <location>
        <position position="102"/>
    </location>
</feature>
<feature type="mutagenesis site" description="Still assembles RbcL8 core." evidence="5">
    <location>
        <begin position="110"/>
        <end position="134"/>
    </location>
</feature>
<feature type="helix" evidence="20">
    <location>
        <begin position="3"/>
        <end position="33"/>
    </location>
</feature>
<feature type="helix" evidence="20">
    <location>
        <begin position="35"/>
        <end position="47"/>
    </location>
</feature>
<feature type="helix" evidence="20">
    <location>
        <begin position="53"/>
        <end position="61"/>
    </location>
</feature>
<feature type="helix" evidence="20">
    <location>
        <begin position="65"/>
        <end position="82"/>
    </location>
</feature>
<feature type="helix" evidence="20">
    <location>
        <begin position="83"/>
        <end position="85"/>
    </location>
</feature>
<feature type="helix" evidence="20">
    <location>
        <begin position="86"/>
        <end position="108"/>
    </location>
</feature>
<reference key="1">
    <citation type="submission" date="1992-12" db="EMBL/GenBank/DDBJ databases">
        <title>Cloning and characterization of RubisCO large subunit and small subunit from Synechococcus sp. PCC7002.</title>
        <authorList>
            <person name="Akiyama H."/>
            <person name="Kanai S."/>
            <person name="Hirano M."/>
            <person name="Sugimoto M."/>
            <person name="Kiyohara M."/>
        </authorList>
    </citation>
    <scope>NUCLEOTIDE SEQUENCE [GENOMIC DNA]</scope>
    <source>
        <strain>ATCC 27264 / PCC 7002 / PR-6</strain>
    </source>
</reference>
<reference key="2">
    <citation type="submission" date="2008-02" db="EMBL/GenBank/DDBJ databases">
        <title>Complete sequence of Synechococcus sp. PCC 7002.</title>
        <authorList>
            <person name="Li T."/>
            <person name="Zhao J."/>
            <person name="Zhao C."/>
            <person name="Liu Z."/>
            <person name="Zhao F."/>
            <person name="Marquardt J."/>
            <person name="Nomura C.T."/>
            <person name="Persson S."/>
            <person name="Detter J.C."/>
            <person name="Richardson P.M."/>
            <person name="Lanz C."/>
            <person name="Schuster S.C."/>
            <person name="Wang J."/>
            <person name="Li S."/>
            <person name="Huang X."/>
            <person name="Cai T."/>
            <person name="Yu Z."/>
            <person name="Luo J."/>
            <person name="Zhao J."/>
            <person name="Bryant D.A."/>
        </authorList>
    </citation>
    <scope>NUCLEOTIDE SEQUENCE [LARGE SCALE GENOMIC DNA]</scope>
    <source>
        <strain>ATCC 27264 / PCC 7002 / PR-6</strain>
    </source>
</reference>
<reference key="3">
    <citation type="journal article" date="2004" name="Plant Cell Physiol.">
        <title>The rbcX gene product promotes the production and assembly of ribulose-1,5-bisphosphate carboxylase/oxygenase of Synechococcus sp. PCC7002 in Escherichia coli.</title>
        <authorList>
            <person name="Onizuka T."/>
            <person name="Endo S."/>
            <person name="Akiyama H."/>
            <person name="Kanai S."/>
            <person name="Hirano M."/>
            <person name="Yokota A."/>
            <person name="Tanaka S."/>
            <person name="Miyasaka H."/>
        </authorList>
    </citation>
    <scope>FUNCTION</scope>
    <scope>EXPRESSION IN E.COLI</scope>
    <scope>FRAMESHIFT MUTATION</scope>
    <source>
        <strain>ATCC 27264 / PCC 7002 / PR-6</strain>
    </source>
</reference>
<reference key="4">
    <citation type="journal article" date="2010" name="Nature">
        <title>Coupled chaperone action in folding and assembly of hexadecameric Rubisco.</title>
        <authorList>
            <person name="Liu C."/>
            <person name="Young A.L."/>
            <person name="Starling-Windhof A."/>
            <person name="Bracher A."/>
            <person name="Saschenbrecker S."/>
            <person name="Rao B.V."/>
            <person name="Rao K.V."/>
            <person name="Berninghausen O."/>
            <person name="Mielke T."/>
            <person name="Hartl F.U."/>
            <person name="Beckmann R."/>
            <person name="Hayer-Hartl M."/>
        </authorList>
    </citation>
    <scope>SUBUNIT</scope>
    <scope>DOMAIN</scope>
    <source>
        <strain>ATCC 27264 / PCC 7002 / PR-6</strain>
    </source>
</reference>
<reference evidence="11 12 13 14 15 16" key="5">
    <citation type="journal article" date="2007" name="Cell">
        <title>Structure and function of RbcX, an assembly chaperone for hexadecameric Rubisco.</title>
        <authorList>
            <person name="Saschenbrecker S."/>
            <person name="Bracher A."/>
            <person name="Rao K.V."/>
            <person name="Rao B.V."/>
            <person name="Hartl F.U."/>
            <person name="Hayer-Hartl M."/>
        </authorList>
    </citation>
    <scope>X-RAY CRYSTALLOGRAPHY (1.90 ANGSTROMS)</scope>
    <scope>X-RAY CRYSTALLOGRAPHY (2.95 ANGSTROMS) IN COMPLEX WITH AN RBCL PEPTIDE</scope>
    <scope>FUNCTION</scope>
    <scope>EXPRESSION IN E.COLI</scope>
    <scope>SUBUNIT</scope>
    <scope>DOMAIN</scope>
    <scope>MUTAGENESIS OF 17-TYR--TYR-20; TYR-17; TYR-20; GLN-29; GLU-32; THR-33; PRO-35; ARG-70; VAL-74; ARG-102 AND 110-THR--GLU-134</scope>
    <source>
        <strain>ATCC 27264 / PCC 7002 / PR-6</strain>
    </source>
</reference>
<reference evidence="17 18 19" key="6">
    <citation type="submission" date="2007-06" db="PDB data bank">
        <title>Crystal Structure of ORF134.</title>
        <authorList>
            <person name="Tomimoto Y."/>
            <person name="Ihara K."/>
            <person name="Onizuka T."/>
            <person name="Kanai S."/>
            <person name="Ashida H."/>
            <person name="Yokota A."/>
            <person name="Tanaka S."/>
            <person name="Miyasaka H."/>
            <person name="Yamada Y."/>
            <person name="Kato R."/>
            <person name="Wakatsuki S."/>
        </authorList>
    </citation>
    <scope>X-RAY CRYSTALLOGRAPHY (2.15 ANGSTROMS)</scope>
    <scope>SUBUNIT</scope>
    <source>
        <strain>ATCC 27264 / PCC 7002 / PR-6</strain>
    </source>
</reference>
<proteinExistence type="evidence at protein level"/>
<dbReference type="EMBL" id="CP000951">
    <property type="protein sequence ID" value="ACA99785.1"/>
    <property type="molecule type" value="Genomic_DNA"/>
</dbReference>
<dbReference type="EMBL" id="D13971">
    <property type="protein sequence ID" value="BAA03077.1"/>
    <property type="molecule type" value="Genomic_DNA"/>
</dbReference>
<dbReference type="RefSeq" id="WP_012307408.1">
    <property type="nucleotide sequence ID" value="NZ_JAHHPU010000002.1"/>
</dbReference>
<dbReference type="PDB" id="2PEI">
    <property type="method" value="X-ray"/>
    <property type="resolution" value="2.70 A"/>
    <property type="chains" value="A/B/C/D/E/F/G/H/I/J/K/L=1-109"/>
</dbReference>
<dbReference type="PDB" id="2PEJ">
    <property type="method" value="X-ray"/>
    <property type="resolution" value="3.40 A"/>
    <property type="chains" value="A/B/C/D/E/F=1-134"/>
</dbReference>
<dbReference type="PDB" id="2PEK">
    <property type="method" value="X-ray"/>
    <property type="resolution" value="3.10 A"/>
    <property type="chains" value="A/B/C/D/E/F=1-134"/>
</dbReference>
<dbReference type="PDB" id="2PEM">
    <property type="method" value="X-ray"/>
    <property type="resolution" value="2.95 A"/>
    <property type="chains" value="A/B/C/D/E/F=1-134"/>
</dbReference>
<dbReference type="PDB" id="2PEN">
    <property type="method" value="X-ray"/>
    <property type="resolution" value="2.80 A"/>
    <property type="chains" value="A/B/C/D/E/F=1-134"/>
</dbReference>
<dbReference type="PDB" id="2PEQ">
    <property type="method" value="X-ray"/>
    <property type="resolution" value="1.90 A"/>
    <property type="chains" value="A/B=1-134"/>
</dbReference>
<dbReference type="PDB" id="2Z44">
    <property type="method" value="X-ray"/>
    <property type="resolution" value="2.50 A"/>
    <property type="chains" value="A=1-134"/>
</dbReference>
<dbReference type="PDB" id="2Z45">
    <property type="method" value="X-ray"/>
    <property type="resolution" value="2.15 A"/>
    <property type="chains" value="A/B=1-134"/>
</dbReference>
<dbReference type="PDB" id="2Z46">
    <property type="method" value="X-ray"/>
    <property type="resolution" value="2.97 A"/>
    <property type="chains" value="A/B/C/D/E/F=1-134"/>
</dbReference>
<dbReference type="PDBsum" id="2PEI"/>
<dbReference type="PDBsum" id="2PEJ"/>
<dbReference type="PDBsum" id="2PEK"/>
<dbReference type="PDBsum" id="2PEM"/>
<dbReference type="PDBsum" id="2PEN"/>
<dbReference type="PDBsum" id="2PEQ"/>
<dbReference type="PDBsum" id="2Z44"/>
<dbReference type="PDBsum" id="2Z45"/>
<dbReference type="PDBsum" id="2Z46"/>
<dbReference type="SMR" id="Q44177"/>
<dbReference type="STRING" id="32049.SYNPCC7002_A1797"/>
<dbReference type="KEGG" id="syp:SYNPCC7002_A1797"/>
<dbReference type="eggNOG" id="ENOG50315SX">
    <property type="taxonomic scope" value="Bacteria"/>
</dbReference>
<dbReference type="HOGENOM" id="CLU_129346_0_0_3"/>
<dbReference type="EvolutionaryTrace" id="Q44177"/>
<dbReference type="Proteomes" id="UP000001688">
    <property type="component" value="Chromosome"/>
</dbReference>
<dbReference type="GO" id="GO:0031470">
    <property type="term" value="C:carboxysome"/>
    <property type="evidence" value="ECO:0007669"/>
    <property type="project" value="UniProtKB-SubCell"/>
</dbReference>
<dbReference type="GO" id="GO:0005737">
    <property type="term" value="C:cytoplasm"/>
    <property type="evidence" value="ECO:0007669"/>
    <property type="project" value="UniProtKB-SubCell"/>
</dbReference>
<dbReference type="GO" id="GO:0044183">
    <property type="term" value="F:protein folding chaperone"/>
    <property type="evidence" value="ECO:0007669"/>
    <property type="project" value="InterPro"/>
</dbReference>
<dbReference type="GO" id="GO:0042803">
    <property type="term" value="F:protein homodimerization activity"/>
    <property type="evidence" value="ECO:0000315"/>
    <property type="project" value="UniProtKB"/>
</dbReference>
<dbReference type="GO" id="GO:0015977">
    <property type="term" value="P:carbon fixation"/>
    <property type="evidence" value="ECO:0007669"/>
    <property type="project" value="UniProtKB-UniRule"/>
</dbReference>
<dbReference type="GO" id="GO:0015979">
    <property type="term" value="P:photosynthesis"/>
    <property type="evidence" value="ECO:0007669"/>
    <property type="project" value="UniProtKB-KW"/>
</dbReference>
<dbReference type="GO" id="GO:0110102">
    <property type="term" value="P:ribulose bisphosphate carboxylase complex assembly"/>
    <property type="evidence" value="ECO:0000315"/>
    <property type="project" value="UniProtKB"/>
</dbReference>
<dbReference type="DisProt" id="DP02968"/>
<dbReference type="Gene3D" id="1.10.1200.210">
    <property type="entry name" value="Chaperonin-like RbcX"/>
    <property type="match status" value="1"/>
</dbReference>
<dbReference type="HAMAP" id="MF_00855">
    <property type="entry name" value="RbcX"/>
    <property type="match status" value="1"/>
</dbReference>
<dbReference type="InterPro" id="IPR038052">
    <property type="entry name" value="Chaperonin_RbcX_sf"/>
</dbReference>
<dbReference type="InterPro" id="IPR003435">
    <property type="entry name" value="Chaperonin_RcbX"/>
</dbReference>
<dbReference type="InterPro" id="IPR046381">
    <property type="entry name" value="RbcX"/>
</dbReference>
<dbReference type="PANTHER" id="PTHR33791">
    <property type="entry name" value="CHAPERONIN-LIKE RBCX PROTEIN 1, CHLOROPLASTIC"/>
    <property type="match status" value="1"/>
</dbReference>
<dbReference type="PANTHER" id="PTHR33791:SF1">
    <property type="entry name" value="RUBISCO CHAPERONE RBCX"/>
    <property type="match status" value="1"/>
</dbReference>
<dbReference type="Pfam" id="PF02341">
    <property type="entry name" value="RbcX"/>
    <property type="match status" value="1"/>
</dbReference>
<dbReference type="SUPFAM" id="SSF158615">
    <property type="entry name" value="RbcX-like"/>
    <property type="match status" value="1"/>
</dbReference>
<name>RBCX_PICP2</name>